<dbReference type="EMBL" id="Z28195">
    <property type="protein sequence ID" value="CAA82039.1"/>
    <property type="molecule type" value="Genomic_DNA"/>
</dbReference>
<dbReference type="EMBL" id="BK006944">
    <property type="protein sequence ID" value="DAA08971.1"/>
    <property type="molecule type" value="Genomic_DNA"/>
</dbReference>
<dbReference type="PIR" id="S38032">
    <property type="entry name" value="S38032"/>
</dbReference>
<dbReference type="RefSeq" id="NP_012726.2">
    <property type="nucleotide sequence ID" value="NM_001179761.1"/>
</dbReference>
<dbReference type="PDB" id="2ZXT">
    <property type="method" value="X-ray"/>
    <property type="resolution" value="3.00 A"/>
    <property type="chains" value="A=282-365"/>
</dbReference>
<dbReference type="PDB" id="3A3C">
    <property type="method" value="X-ray"/>
    <property type="resolution" value="2.50 A"/>
    <property type="chains" value="A=282-353"/>
</dbReference>
<dbReference type="PDBsum" id="2ZXT"/>
<dbReference type="PDBsum" id="3A3C"/>
<dbReference type="SMR" id="P36046"/>
<dbReference type="BioGRID" id="33926">
    <property type="interactions" value="223"/>
</dbReference>
<dbReference type="DIP" id="DIP-5432N"/>
<dbReference type="FunCoup" id="P36046">
    <property type="interactions" value="167"/>
</dbReference>
<dbReference type="IntAct" id="P36046">
    <property type="interactions" value="14"/>
</dbReference>
<dbReference type="MINT" id="P36046"/>
<dbReference type="STRING" id="4932.YKL195W"/>
<dbReference type="TCDB" id="3.A.8.1.1">
    <property type="family name" value="the mitochondrial protein translocase (mpt) family"/>
</dbReference>
<dbReference type="iPTMnet" id="P36046"/>
<dbReference type="PaxDb" id="4932-YKL195W"/>
<dbReference type="PeptideAtlas" id="P36046"/>
<dbReference type="EnsemblFungi" id="YKL195W_mRNA">
    <property type="protein sequence ID" value="YKL195W"/>
    <property type="gene ID" value="YKL195W"/>
</dbReference>
<dbReference type="GeneID" id="853639"/>
<dbReference type="KEGG" id="sce:YKL195W"/>
<dbReference type="AGR" id="SGD:S000001678"/>
<dbReference type="SGD" id="S000001678">
    <property type="gene designation" value="MIA40"/>
</dbReference>
<dbReference type="VEuPathDB" id="FungiDB:YKL195W"/>
<dbReference type="eggNOG" id="KOG4149">
    <property type="taxonomic scope" value="Eukaryota"/>
</dbReference>
<dbReference type="GeneTree" id="ENSGT00940000170392"/>
<dbReference type="HOGENOM" id="CLU_683707_0_0_1"/>
<dbReference type="InParanoid" id="P36046"/>
<dbReference type="OrthoDB" id="7481291at2759"/>
<dbReference type="BioCyc" id="YEAST:G3O-31957-MONOMER"/>
<dbReference type="BioGRID-ORCS" id="853639">
    <property type="hits" value="2 hits in 10 CRISPR screens"/>
</dbReference>
<dbReference type="EvolutionaryTrace" id="P36046"/>
<dbReference type="PRO" id="PR:P36046"/>
<dbReference type="Proteomes" id="UP000002311">
    <property type="component" value="Chromosome XI"/>
</dbReference>
<dbReference type="RNAct" id="P36046">
    <property type="molecule type" value="protein"/>
</dbReference>
<dbReference type="GO" id="GO:0005743">
    <property type="term" value="C:mitochondrial inner membrane"/>
    <property type="evidence" value="ECO:0000314"/>
    <property type="project" value="SGD"/>
</dbReference>
<dbReference type="GO" id="GO:0005758">
    <property type="term" value="C:mitochondrial intermembrane space"/>
    <property type="evidence" value="ECO:0000314"/>
    <property type="project" value="SGD"/>
</dbReference>
<dbReference type="GO" id="GO:0005739">
    <property type="term" value="C:mitochondrion"/>
    <property type="evidence" value="ECO:0007005"/>
    <property type="project" value="SGD"/>
</dbReference>
<dbReference type="GO" id="GO:0051537">
    <property type="term" value="F:2 iron, 2 sulfur cluster binding"/>
    <property type="evidence" value="ECO:0000314"/>
    <property type="project" value="SGD"/>
</dbReference>
<dbReference type="GO" id="GO:0016491">
    <property type="term" value="F:oxidoreductase activity"/>
    <property type="evidence" value="ECO:0000315"/>
    <property type="project" value="SGD"/>
</dbReference>
<dbReference type="GO" id="GO:0003756">
    <property type="term" value="F:protein disulfide isomerase activity"/>
    <property type="evidence" value="ECO:0000314"/>
    <property type="project" value="SGD"/>
</dbReference>
<dbReference type="GO" id="GO:0015035">
    <property type="term" value="F:protein-disulfide reductase activity"/>
    <property type="evidence" value="ECO:0000318"/>
    <property type="project" value="GO_Central"/>
</dbReference>
<dbReference type="GO" id="GO:0016972">
    <property type="term" value="F:thiol oxidase activity"/>
    <property type="evidence" value="ECO:0000314"/>
    <property type="project" value="SGD"/>
</dbReference>
<dbReference type="GO" id="GO:0006457">
    <property type="term" value="P:protein folding"/>
    <property type="evidence" value="ECO:0000314"/>
    <property type="project" value="SGD"/>
</dbReference>
<dbReference type="GO" id="GO:0045041">
    <property type="term" value="P:protein import into mitochondrial intermembrane space"/>
    <property type="evidence" value="ECO:0000315"/>
    <property type="project" value="SGD"/>
</dbReference>
<dbReference type="FunFam" id="1.10.287.2900:FF:000002">
    <property type="entry name" value="Mitochondrial intermembrane space import and assembly protein"/>
    <property type="match status" value="1"/>
</dbReference>
<dbReference type="Gene3D" id="1.10.287.2900">
    <property type="match status" value="1"/>
</dbReference>
<dbReference type="InterPro" id="IPR010625">
    <property type="entry name" value="CHCH"/>
</dbReference>
<dbReference type="InterPro" id="IPR039289">
    <property type="entry name" value="CHCHD4"/>
</dbReference>
<dbReference type="PANTHER" id="PTHR21622">
    <property type="entry name" value="COILED-COIL-HELIX-COILED-COIL-HELIX DOMAIN CONTAINING 4"/>
    <property type="match status" value="1"/>
</dbReference>
<dbReference type="PANTHER" id="PTHR21622:SF0">
    <property type="entry name" value="COILED-COIL-HELIX-COILED-COIL-HELIX DOMAIN CONTAINING 4"/>
    <property type="match status" value="1"/>
</dbReference>
<dbReference type="Pfam" id="PF06747">
    <property type="entry name" value="CHCH"/>
    <property type="match status" value="1"/>
</dbReference>
<dbReference type="PROSITE" id="PS51808">
    <property type="entry name" value="CHCH"/>
    <property type="match status" value="1"/>
</dbReference>
<keyword id="KW-0002">3D-structure</keyword>
<keyword id="KW-0903">Direct protein sequencing</keyword>
<keyword id="KW-1015">Disulfide bond</keyword>
<keyword id="KW-0472">Membrane</keyword>
<keyword id="KW-0496">Mitochondrion</keyword>
<keyword id="KW-0999">Mitochondrion inner membrane</keyword>
<keyword id="KW-0560">Oxidoreductase</keyword>
<keyword id="KW-0653">Protein transport</keyword>
<keyword id="KW-0676">Redox-active center</keyword>
<keyword id="KW-1185">Reference proteome</keyword>
<keyword id="KW-0735">Signal-anchor</keyword>
<keyword id="KW-0809">Transit peptide</keyword>
<keyword id="KW-0811">Translocation</keyword>
<keyword id="KW-0812">Transmembrane</keyword>
<keyword id="KW-1133">Transmembrane helix</keyword>
<keyword id="KW-0813">Transport</keyword>
<protein>
    <recommendedName>
        <fullName>Mitochondrial intermembrane space import and assembly protein 40</fullName>
    </recommendedName>
    <alternativeName>
        <fullName>Mitochondrial import inner membrane translocase TIM40</fullName>
    </alternativeName>
</protein>
<sequence>MLRNLVVRNACRNRPSIQVARGLCRHQTRRLMASSPQFGRNSNQEKTAGFIMGILSMAGALYFIAPNRKPLFASRKVESDKTAEEELSSGGEQSPENEDDNNSKSDENGDDNDSKNDETEAGPQLGGDKIGASKVAEDGELVVLAEEDNKSSEDKDTDESKVSTKDDEQSNEDNATANNQKDENISSENSEENTSDKTLDNNAGSSEKKDPEHSDDEKSQQGQSDDKTTTEDNNGEEESSKKTVSDSENSAKQSESSDEEKEELRKQEEKQMGPTEEEVQHEGAYNPDTGEINWDCPCLGGMAHGPCGEEFKSAFSCFVYSEAEPKGIDCVEKFQHMQDCFRKYPEHYAEQLKETSDDEEPQDKVKVNTIESAPNVSSAKENAAKKAEQSDVKKEPLNEESKP</sequence>
<feature type="transit peptide" description="Mitochondrion" evidence="9">
    <location>
        <begin position="1"/>
        <end position="31"/>
    </location>
</feature>
<feature type="chain" id="PRO_0000203135" description="Mitochondrial intermembrane space import and assembly protein 40">
    <location>
        <begin position="32"/>
        <end position="403"/>
    </location>
</feature>
<feature type="topological domain" description="Mitochondrial matrix" evidence="1">
    <location>
        <begin position="33"/>
        <end position="46"/>
    </location>
</feature>
<feature type="transmembrane region" description="Helical; Signal-anchor for type II membrane protein" evidence="1">
    <location>
        <begin position="47"/>
        <end position="66"/>
    </location>
</feature>
<feature type="topological domain" description="Mitochondrial intermembrane" evidence="1">
    <location>
        <begin position="67"/>
        <end position="403"/>
    </location>
</feature>
<feature type="domain" description="CHCH" evidence="2">
    <location>
        <begin position="304"/>
        <end position="348"/>
    </location>
</feature>
<feature type="region of interest" description="Disordered" evidence="3">
    <location>
        <begin position="75"/>
        <end position="292"/>
    </location>
</feature>
<feature type="region of interest" description="Disordered" evidence="3">
    <location>
        <begin position="351"/>
        <end position="403"/>
    </location>
</feature>
<feature type="short sequence motif" description="Cx9C motif 1" evidence="2">
    <location>
        <begin position="307"/>
        <end position="317"/>
    </location>
</feature>
<feature type="short sequence motif" description="Cx9C motif 2" evidence="2">
    <location>
        <begin position="330"/>
        <end position="340"/>
    </location>
</feature>
<feature type="compositionally biased region" description="Basic and acidic residues" evidence="3">
    <location>
        <begin position="75"/>
        <end position="84"/>
    </location>
</feature>
<feature type="compositionally biased region" description="Basic and acidic residues" evidence="3">
    <location>
        <begin position="101"/>
        <end position="118"/>
    </location>
</feature>
<feature type="compositionally biased region" description="Basic and acidic residues" evidence="3">
    <location>
        <begin position="147"/>
        <end position="168"/>
    </location>
</feature>
<feature type="compositionally biased region" description="Basic and acidic residues" evidence="3">
    <location>
        <begin position="206"/>
        <end position="230"/>
    </location>
</feature>
<feature type="compositionally biased region" description="Basic and acidic residues" evidence="3">
    <location>
        <begin position="262"/>
        <end position="271"/>
    </location>
</feature>
<feature type="compositionally biased region" description="Polar residues" evidence="3">
    <location>
        <begin position="369"/>
        <end position="378"/>
    </location>
</feature>
<feature type="compositionally biased region" description="Basic and acidic residues" evidence="3">
    <location>
        <begin position="382"/>
        <end position="403"/>
    </location>
</feature>
<feature type="disulfide bond" description="Redox-active" evidence="13">
    <location>
        <begin position="296"/>
        <end position="298"/>
    </location>
</feature>
<feature type="disulfide bond" evidence="2 13">
    <location>
        <begin position="307"/>
        <end position="340"/>
    </location>
</feature>
<feature type="disulfide bond" evidence="2 13">
    <location>
        <begin position="317"/>
        <end position="330"/>
    </location>
</feature>
<feature type="mutagenesis site" description="Loss of function; when associated with S-298." evidence="8 9">
    <original>C</original>
    <variation>S</variation>
    <location>
        <position position="296"/>
    </location>
</feature>
<feature type="mutagenesis site" description="Loss of function; when associated with S-296." evidence="8 9">
    <original>C</original>
    <variation>S</variation>
    <location>
        <position position="298"/>
    </location>
</feature>
<feature type="mutagenesis site" description="Loss of function; when associated with S-317." evidence="8 9">
    <original>C</original>
    <variation>S</variation>
    <location>
        <position position="307"/>
    </location>
</feature>
<feature type="mutagenesis site" description="Loss of function; when associated with S-307." evidence="8">
    <original>C</original>
    <variation>S</variation>
    <location>
        <position position="317"/>
    </location>
</feature>
<feature type="mutagenesis site" description="Loss of function; when associated with S-340." evidence="8">
    <original>C</original>
    <variation>S</variation>
    <location>
        <position position="330"/>
    </location>
</feature>
<feature type="mutagenesis site" description="Loss of function; when associated with S-330." evidence="8">
    <original>C</original>
    <variation>S</variation>
    <location>
        <position position="340"/>
    </location>
</feature>
<feature type="helix" evidence="16">
    <location>
        <begin position="274"/>
        <end position="277"/>
    </location>
</feature>
<feature type="helix" evidence="16">
    <location>
        <begin position="280"/>
        <end position="284"/>
    </location>
</feature>
<feature type="turn" evidence="16">
    <location>
        <begin position="287"/>
        <end position="290"/>
    </location>
</feature>
<feature type="helix" evidence="16">
    <location>
        <begin position="297"/>
        <end position="299"/>
    </location>
</feature>
<feature type="turn" evidence="16">
    <location>
        <begin position="300"/>
        <end position="303"/>
    </location>
</feature>
<feature type="helix" evidence="16">
    <location>
        <begin position="308"/>
        <end position="319"/>
    </location>
</feature>
<feature type="strand" evidence="16">
    <location>
        <begin position="323"/>
        <end position="325"/>
    </location>
</feature>
<feature type="turn" evidence="16">
    <location>
        <begin position="326"/>
        <end position="329"/>
    </location>
</feature>
<feature type="helix" evidence="16">
    <location>
        <begin position="331"/>
        <end position="341"/>
    </location>
</feature>
<feature type="turn" evidence="16">
    <location>
        <begin position="345"/>
        <end position="347"/>
    </location>
</feature>
<comment type="function">
    <text evidence="7 8 9 10 11 13">Required for the import and folding of small cysteine-containing proteins (small Tim) in the mitochondrial intermembrane space (IMS). Forms a redox cycle with ERV1 that involves a disulfide relay system. Precursor proteins to be imported into the IMS are translocated in their reduced form into the mitochondria. The oxidized form of MIA40 forms a transient intermolecular disulfide bridge with the reduced precursor protein, resulting in oxidation of the precursor protein that now contains an intramolecular disulfide bond and is able to undergo folding in the IMS. Reduced MIA40 is reoxidized by FAD-linked sulfhydryl oxidase ERV1.</text>
</comment>
<comment type="cofactor">
    <cofactor>
        <name>Cu(2+)</name>
        <dbReference type="ChEBI" id="CHEBI:29036"/>
    </cofactor>
    <cofactor>
        <name>Zn(2+)</name>
        <dbReference type="ChEBI" id="CHEBI:29105"/>
    </cofactor>
    <text>Cu(2+) or Zn(2+).</text>
</comment>
<comment type="subunit">
    <text evidence="7 9 10 11 14">Monomer. Interacts with the FAD-linked sulfhydryl oxidase ERV1 and with the substrate proteins COX17, TIM9, and TIM13, forming transient intermolecular disulfide bridges. Interacts with FCJ1.</text>
</comment>
<comment type="interaction">
    <interactant intactId="EBI-26978">
        <id>P36046</id>
    </interactant>
    <interactant intactId="EBI-8059929">
        <id>P53722</id>
        <label>ATP23</label>
    </interactant>
    <organismsDiffer>false</organismsDiffer>
    <experiments>5</experiments>
</comment>
<comment type="interaction">
    <interactant intactId="EBI-26978">
        <id>P36046</id>
    </interactant>
    <interactant intactId="EBI-6621">
        <id>P27882</id>
        <label>ERV1</label>
    </interactant>
    <organismsDiffer>false</organismsDiffer>
    <experiments>4</experiments>
</comment>
<comment type="subcellular location">
    <subcellularLocation>
        <location evidence="4 6 7 8 9 12">Mitochondrion inner membrane</location>
        <topology evidence="4 6 7 8 9 12">Single-pass type II membrane protein</topology>
        <orientation evidence="4 6 7 8 9 12">Intermembrane side</orientation>
    </subcellularLocation>
</comment>
<comment type="domain">
    <text evidence="15">The CHCH domain contains a conserved twin Cys-X(9)-Cys motif which is required for import and stability of MIA40 in mitochondria.</text>
</comment>
<comment type="miscellaneous">
    <text evidence="5">Present with 5040 molecules/cell in log phase SD medium.</text>
</comment>
<evidence type="ECO:0000255" key="1"/>
<evidence type="ECO:0000255" key="2">
    <source>
        <dbReference type="PROSITE-ProRule" id="PRU01150"/>
    </source>
</evidence>
<evidence type="ECO:0000256" key="3">
    <source>
        <dbReference type="SAM" id="MobiDB-lite"/>
    </source>
</evidence>
<evidence type="ECO:0000269" key="4">
    <source>
    </source>
</evidence>
<evidence type="ECO:0000269" key="5">
    <source>
    </source>
</evidence>
<evidence type="ECO:0000269" key="6">
    <source>
    </source>
</evidence>
<evidence type="ECO:0000269" key="7">
    <source>
    </source>
</evidence>
<evidence type="ECO:0000269" key="8">
    <source>
    </source>
</evidence>
<evidence type="ECO:0000269" key="9">
    <source>
    </source>
</evidence>
<evidence type="ECO:0000269" key="10">
    <source>
    </source>
</evidence>
<evidence type="ECO:0000269" key="11">
    <source>
    </source>
</evidence>
<evidence type="ECO:0000269" key="12">
    <source>
    </source>
</evidence>
<evidence type="ECO:0000269" key="13">
    <source>
    </source>
</evidence>
<evidence type="ECO:0000269" key="14">
    <source>
    </source>
</evidence>
<evidence type="ECO:0000305" key="15"/>
<evidence type="ECO:0007829" key="16">
    <source>
        <dbReference type="PDB" id="3A3C"/>
    </source>
</evidence>
<proteinExistence type="evidence at protein level"/>
<organism>
    <name type="scientific">Saccharomyces cerevisiae (strain ATCC 204508 / S288c)</name>
    <name type="common">Baker's yeast</name>
    <dbReference type="NCBI Taxonomy" id="559292"/>
    <lineage>
        <taxon>Eukaryota</taxon>
        <taxon>Fungi</taxon>
        <taxon>Dikarya</taxon>
        <taxon>Ascomycota</taxon>
        <taxon>Saccharomycotina</taxon>
        <taxon>Saccharomycetes</taxon>
        <taxon>Saccharomycetales</taxon>
        <taxon>Saccharomycetaceae</taxon>
        <taxon>Saccharomyces</taxon>
    </lineage>
</organism>
<accession>P36046</accession>
<accession>D6VX05</accession>
<reference key="1">
    <citation type="journal article" date="1994" name="Nature">
        <title>Complete DNA sequence of yeast chromosome XI.</title>
        <authorList>
            <person name="Dujon B."/>
            <person name="Alexandraki D."/>
            <person name="Andre B."/>
            <person name="Ansorge W."/>
            <person name="Baladron V."/>
            <person name="Ballesta J.P.G."/>
            <person name="Banrevi A."/>
            <person name="Bolle P.-A."/>
            <person name="Bolotin-Fukuhara M."/>
            <person name="Bossier P."/>
            <person name="Bou G."/>
            <person name="Boyer J."/>
            <person name="Buitrago M.J."/>
            <person name="Cheret G."/>
            <person name="Colleaux L."/>
            <person name="Daignan-Fornier B."/>
            <person name="del Rey F."/>
            <person name="Dion C."/>
            <person name="Domdey H."/>
            <person name="Duesterhoeft A."/>
            <person name="Duesterhus S."/>
            <person name="Entian K.-D."/>
            <person name="Erfle H."/>
            <person name="Esteban P.F."/>
            <person name="Feldmann H."/>
            <person name="Fernandes L."/>
            <person name="Fobo G.M."/>
            <person name="Fritz C."/>
            <person name="Fukuhara H."/>
            <person name="Gabel C."/>
            <person name="Gaillon L."/>
            <person name="Garcia-Cantalejo J.M."/>
            <person name="Garcia-Ramirez J.J."/>
            <person name="Gent M.E."/>
            <person name="Ghazvini M."/>
            <person name="Goffeau A."/>
            <person name="Gonzalez A."/>
            <person name="Grothues D."/>
            <person name="Guerreiro P."/>
            <person name="Hegemann J.H."/>
            <person name="Hewitt N."/>
            <person name="Hilger F."/>
            <person name="Hollenberg C.P."/>
            <person name="Horaitis O."/>
            <person name="Indge K.J."/>
            <person name="Jacquier A."/>
            <person name="James C.M."/>
            <person name="Jauniaux J.-C."/>
            <person name="Jimenez A."/>
            <person name="Keuchel H."/>
            <person name="Kirchrath L."/>
            <person name="Kleine K."/>
            <person name="Koetter P."/>
            <person name="Legrain P."/>
            <person name="Liebl S."/>
            <person name="Louis E.J."/>
            <person name="Maia e Silva A."/>
            <person name="Marck C."/>
            <person name="Monnier A.-L."/>
            <person name="Moestl D."/>
            <person name="Mueller S."/>
            <person name="Obermaier B."/>
            <person name="Oliver S.G."/>
            <person name="Pallier C."/>
            <person name="Pascolo S."/>
            <person name="Pfeiffer F."/>
            <person name="Philippsen P."/>
            <person name="Planta R.J."/>
            <person name="Pohl F.M."/>
            <person name="Pohl T.M."/>
            <person name="Poehlmann R."/>
            <person name="Portetelle D."/>
            <person name="Purnelle B."/>
            <person name="Puzos V."/>
            <person name="Ramezani Rad M."/>
            <person name="Rasmussen S.W."/>
            <person name="Remacha M.A."/>
            <person name="Revuelta J.L."/>
            <person name="Richard G.-F."/>
            <person name="Rieger M."/>
            <person name="Rodrigues-Pousada C."/>
            <person name="Rose M."/>
            <person name="Rupp T."/>
            <person name="Santos M.A."/>
            <person name="Schwager C."/>
            <person name="Sensen C."/>
            <person name="Skala J."/>
            <person name="Soares H."/>
            <person name="Sor F."/>
            <person name="Stegemann J."/>
            <person name="Tettelin H."/>
            <person name="Thierry A."/>
            <person name="Tzermia M."/>
            <person name="Urrestarazu L.A."/>
            <person name="van Dyck L."/>
            <person name="van Vliet-Reedijk J.C."/>
            <person name="Valens M."/>
            <person name="Vandenbol M."/>
            <person name="Vilela C."/>
            <person name="Vissers S."/>
            <person name="von Wettstein D."/>
            <person name="Voss H."/>
            <person name="Wiemann S."/>
            <person name="Xu G."/>
            <person name="Zimmermann J."/>
            <person name="Haasemann M."/>
            <person name="Becker I."/>
            <person name="Mewes H.-W."/>
        </authorList>
    </citation>
    <scope>NUCLEOTIDE SEQUENCE [LARGE SCALE GENOMIC DNA]</scope>
    <source>
        <strain>ATCC 204508 / S288c</strain>
    </source>
</reference>
<reference key="2">
    <citation type="journal article" date="2014" name="G3 (Bethesda)">
        <title>The reference genome sequence of Saccharomyces cerevisiae: Then and now.</title>
        <authorList>
            <person name="Engel S.R."/>
            <person name="Dietrich F.S."/>
            <person name="Fisk D.G."/>
            <person name="Binkley G."/>
            <person name="Balakrishnan R."/>
            <person name="Costanzo M.C."/>
            <person name="Dwight S.S."/>
            <person name="Hitz B.C."/>
            <person name="Karra K."/>
            <person name="Nash R.S."/>
            <person name="Weng S."/>
            <person name="Wong E.D."/>
            <person name="Lloyd P."/>
            <person name="Skrzypek M.S."/>
            <person name="Miyasato S.R."/>
            <person name="Simison M."/>
            <person name="Cherry J.M."/>
        </authorList>
    </citation>
    <scope>GENOME REANNOTATION</scope>
    <source>
        <strain>ATCC 204508 / S288c</strain>
    </source>
</reference>
<reference key="3">
    <citation type="journal article" date="2005" name="FEBS Lett.">
        <title>Mia40, a novel factor for protein import into the intermembrane space of mitochondria is able to bind metal ions.</title>
        <authorList>
            <person name="Terziyska N."/>
            <person name="Lutz T."/>
            <person name="Kozany C."/>
            <person name="Mokranjac D."/>
            <person name="Mesecke N."/>
            <person name="Neupert W."/>
            <person name="Herrmann J.M."/>
            <person name="Hell K."/>
        </authorList>
    </citation>
    <scope>PROTEIN SEQUENCE OF 32-36</scope>
    <scope>FUNCTION</scope>
    <scope>SUBCELLULAR LOCATION</scope>
    <scope>INTERACTION WITH TIM13</scope>
    <scope>MUTAGENESIS OF CYS-296; CYS-298 AND CYS-307</scope>
    <scope>METAL-BINDING</scope>
</reference>
<reference key="4">
    <citation type="journal article" date="2003" name="Mol. Cell">
        <title>Assigning function to yeast proteins by integration of technologies.</title>
        <authorList>
            <person name="Hazbun T.R."/>
            <person name="Malmstroem L."/>
            <person name="Anderson S."/>
            <person name="Graczyk B.J."/>
            <person name="Fox B."/>
            <person name="Riffle M."/>
            <person name="Sundin B.A."/>
            <person name="Aranda J.D."/>
            <person name="McDonald W.H."/>
            <person name="Chiu C.-H."/>
            <person name="Snydsman B.E."/>
            <person name="Bradley P."/>
            <person name="Muller E.G.D."/>
            <person name="Fields S."/>
            <person name="Baker D."/>
            <person name="Yates J.R. III"/>
            <person name="Davis T.N."/>
        </authorList>
    </citation>
    <scope>IDENTIFICATION BY MASS SPECTROMETRY</scope>
</reference>
<reference key="5">
    <citation type="journal article" date="2003" name="Nature">
        <title>Sequencing and comparison of yeast species to identify genes and regulatory elements.</title>
        <authorList>
            <person name="Kellis M."/>
            <person name="Patterson N."/>
            <person name="Endrizzi M."/>
            <person name="Birren B.W."/>
            <person name="Lander E.S."/>
        </authorList>
    </citation>
    <scope>IDENTIFICATION OF PROBABLE INITIATION SITE</scope>
</reference>
<reference key="6">
    <citation type="journal article" date="2003" name="Nature">
        <title>Global analysis of protein localization in budding yeast.</title>
        <authorList>
            <person name="Huh W.-K."/>
            <person name="Falvo J.V."/>
            <person name="Gerke L.C."/>
            <person name="Carroll A.S."/>
            <person name="Howson R.W."/>
            <person name="Weissman J.S."/>
            <person name="O'Shea E.K."/>
        </authorList>
    </citation>
    <scope>SUBCELLULAR LOCATION [LARGE SCALE ANALYSIS]</scope>
</reference>
<reference key="7">
    <citation type="journal article" date="2003" name="Nature">
        <title>Global analysis of protein expression in yeast.</title>
        <authorList>
            <person name="Ghaemmaghami S."/>
            <person name="Huh W.-K."/>
            <person name="Bower K."/>
            <person name="Howson R.W."/>
            <person name="Belle A."/>
            <person name="Dephoure N."/>
            <person name="O'Shea E.K."/>
            <person name="Weissman J.S."/>
        </authorList>
    </citation>
    <scope>LEVEL OF PROTEIN EXPRESSION [LARGE SCALE ANALYSIS]</scope>
</reference>
<reference key="8">
    <citation type="journal article" date="2003" name="Proc. Natl. Acad. Sci. U.S.A.">
        <title>The proteome of Saccharomyces cerevisiae mitochondria.</title>
        <authorList>
            <person name="Sickmann A."/>
            <person name="Reinders J."/>
            <person name="Wagner Y."/>
            <person name="Joppich C."/>
            <person name="Zahedi R.P."/>
            <person name="Meyer H.E."/>
            <person name="Schoenfisch B."/>
            <person name="Perschil I."/>
            <person name="Chacinska A."/>
            <person name="Guiard B."/>
            <person name="Rehling P."/>
            <person name="Pfanner N."/>
            <person name="Meisinger C."/>
        </authorList>
    </citation>
    <scope>SUBCELLULAR LOCATION [LARGE SCALE ANALYSIS]</scope>
    <source>
        <strain>ATCC 76625 / YPH499</strain>
    </source>
</reference>
<reference key="9">
    <citation type="journal article" date="2004" name="EMBO J.">
        <title>Essential role of Mia40 in import and assembly of mitochondrial intermembrane space proteins.</title>
        <authorList>
            <person name="Chacinska A."/>
            <person name="Pfannschmidt S."/>
            <person name="Wiedemann N."/>
            <person name="Kozjak V."/>
            <person name="Sanjuan Szklarz L.K."/>
            <person name="Schulze-Specking A."/>
            <person name="Truscott K.N."/>
            <person name="Guiard B."/>
            <person name="Meisinger C."/>
            <person name="Pfanner N."/>
        </authorList>
    </citation>
    <scope>FUNCTION</scope>
    <scope>SUBCELLULAR LOCATION</scope>
    <scope>INTERACTION WITH TIM9</scope>
</reference>
<reference key="10">
    <citation type="journal article" date="2004" name="J. Biol. Chem.">
        <title>Identification of Tim40 that mediates protein sorting to the mitochondrial intermembrane space.</title>
        <authorList>
            <person name="Naoe M."/>
            <person name="Ohwa Y."/>
            <person name="Ishikawa D."/>
            <person name="Ohshima C."/>
            <person name="Nishikawa S."/>
            <person name="Yamamoto H."/>
            <person name="Endo T."/>
        </authorList>
    </citation>
    <scope>FUNCTION</scope>
    <scope>SUBCELLULAR LOCATION</scope>
    <scope>MUTAGENESIS OF CYS-296; CYS-298; CYS-307; CYS-317; CYS-330 AND CYS-340</scope>
</reference>
<reference key="11">
    <citation type="journal article" date="2005" name="Cell">
        <title>A disulfide relay system in the intermembrane space of mitochondria that mediates protein import.</title>
        <authorList>
            <person name="Mesecke N."/>
            <person name="Terziyska N."/>
            <person name="Kozany C."/>
            <person name="Baumann F."/>
            <person name="Neupert W."/>
            <person name="Hell K."/>
            <person name="Herrmann J.M."/>
        </authorList>
    </citation>
    <scope>FUNCTION</scope>
    <scope>INTERACTION WITH COX17; ERV1 AND TIM13</scope>
</reference>
<reference key="12">
    <citation type="journal article" date="2005" name="J. Mol. Biol.">
        <title>The essential mitochondrial protein Erv1 cooperates with Mia40 in biogenesis of intermembrane space proteins.</title>
        <authorList>
            <person name="Rissler M."/>
            <person name="Wiedemann N."/>
            <person name="Pfannschmidt S."/>
            <person name="Gabriel K."/>
            <person name="Guiard B."/>
            <person name="Pfanner N."/>
            <person name="Chacinska A."/>
        </authorList>
    </citation>
    <scope>FUNCTION</scope>
    <scope>INTERACTION WITH ERV1</scope>
</reference>
<reference key="13">
    <citation type="journal article" date="2006" name="Mol. Biol. Cell">
        <title>Proteomic analysis of the yeast mitochondrial outer membrane reveals accumulation of a subclass of preproteins.</title>
        <authorList>
            <person name="Zahedi R.P."/>
            <person name="Sickmann A."/>
            <person name="Boehm A.M."/>
            <person name="Winkler C."/>
            <person name="Zufall N."/>
            <person name="Schoenfisch B."/>
            <person name="Guiard B."/>
            <person name="Pfanner N."/>
            <person name="Meisinger C."/>
        </authorList>
    </citation>
    <scope>SUBCELLULAR LOCATION</scope>
    <scope>IDENTIFICATION BY MASS SPECTROMETRY</scope>
</reference>
<reference key="14">
    <citation type="journal article" date="2011" name="Dev. Cell">
        <title>Dual role of mitofilin in mitochondrial membrane organization and protein biogenesis.</title>
        <authorList>
            <person name="von der Malsburg K."/>
            <person name="Muller J.M."/>
            <person name="Bohnert M."/>
            <person name="Oeljeklaus S."/>
            <person name="Kwiatkowska P."/>
            <person name="Becker T."/>
            <person name="Loniewska-Lwowska A."/>
            <person name="Wiese S."/>
            <person name="Rao S."/>
            <person name="Milenkovic D."/>
            <person name="Hutu D.P."/>
            <person name="Zerbes R.M."/>
            <person name="Schulze-Specking A."/>
            <person name="Meyer H.E."/>
            <person name="Martinou J.C."/>
            <person name="Rospert S."/>
            <person name="Rehling P."/>
            <person name="Meisinger C."/>
            <person name="Veenhuis M."/>
            <person name="Warscheid B."/>
            <person name="van der Klei I.J."/>
            <person name="Pfanner N."/>
            <person name="Chacinska A."/>
            <person name="van der Laan M."/>
        </authorList>
    </citation>
    <scope>INTERACTION WITH FCJ1</scope>
</reference>
<reference key="15">
    <citation type="journal article" date="2009" name="Proc. Natl. Acad. Sci. U.S.A.">
        <title>Structural basis of yeast Tim40/Mia40 as an oxidative translocator in the mitochondrial intermembrane space.</title>
        <authorList>
            <person name="Kawano S."/>
            <person name="Yamano K."/>
            <person name="Naoe M."/>
            <person name="Momose T."/>
            <person name="Terao K."/>
            <person name="Nishikawa S."/>
            <person name="Watanabe N."/>
            <person name="Endo T."/>
        </authorList>
    </citation>
    <scope>X-RAY CRYSTALLOGRAPHY (3.0 ANGSTROMS) OF 284-353</scope>
    <scope>FUNCTION</scope>
    <scope>DISULFIDE BONDS</scope>
</reference>
<gene>
    <name type="primary">MIA40</name>
    <name type="synonym">TIM40</name>
    <name type="ordered locus">YKL195W</name>
</gene>
<name>MIA40_YEAST</name>